<keyword id="KW-0966">Cell projection</keyword>
<keyword id="KW-0969">Cilium</keyword>
<keyword id="KW-0963">Cytoplasm</keyword>
<keyword id="KW-0968">Cytoplasmic vesicle</keyword>
<keyword id="KW-0206">Cytoskeleton</keyword>
<keyword id="KW-0282">Flagellum</keyword>
<keyword id="KW-0539">Nucleus</keyword>
<keyword id="KW-0597">Phosphoprotein</keyword>
<keyword id="KW-1185">Reference proteome</keyword>
<organism>
    <name type="scientific">Sus scrofa</name>
    <name type="common">Pig</name>
    <dbReference type="NCBI Taxonomy" id="9823"/>
    <lineage>
        <taxon>Eukaryota</taxon>
        <taxon>Metazoa</taxon>
        <taxon>Chordata</taxon>
        <taxon>Craniata</taxon>
        <taxon>Vertebrata</taxon>
        <taxon>Euteleostomi</taxon>
        <taxon>Mammalia</taxon>
        <taxon>Eutheria</taxon>
        <taxon>Laurasiatheria</taxon>
        <taxon>Artiodactyla</taxon>
        <taxon>Suina</taxon>
        <taxon>Suidae</taxon>
        <taxon>Sus</taxon>
    </lineage>
</organism>
<name>DYLT4_PIG</name>
<dbReference type="EMBL" id="AJ973122">
    <property type="protein sequence ID" value="CAJ00222.1"/>
    <property type="molecule type" value="mRNA"/>
</dbReference>
<dbReference type="RefSeq" id="NP_001027527.1">
    <property type="nucleotide sequence ID" value="NM_001032356.1"/>
</dbReference>
<dbReference type="SMR" id="Q4VYA0"/>
<dbReference type="FunCoup" id="Q4VYA0">
    <property type="interactions" value="360"/>
</dbReference>
<dbReference type="STRING" id="9823.ENSSSCP00000054196"/>
<dbReference type="PaxDb" id="9823-ENSSSCP00000004243"/>
<dbReference type="GeneID" id="606747"/>
<dbReference type="KEGG" id="ssc:606747"/>
<dbReference type="CTD" id="343521"/>
<dbReference type="eggNOG" id="KOG4108">
    <property type="taxonomic scope" value="Eukaryota"/>
</dbReference>
<dbReference type="InParanoid" id="Q4VYA0"/>
<dbReference type="OrthoDB" id="10260741at2759"/>
<dbReference type="Proteomes" id="UP000008227">
    <property type="component" value="Unplaced"/>
</dbReference>
<dbReference type="Proteomes" id="UP000314985">
    <property type="component" value="Unplaced"/>
</dbReference>
<dbReference type="Proteomes" id="UP000694570">
    <property type="component" value="Unplaced"/>
</dbReference>
<dbReference type="Proteomes" id="UP000694571">
    <property type="component" value="Unplaced"/>
</dbReference>
<dbReference type="Proteomes" id="UP000694720">
    <property type="component" value="Unplaced"/>
</dbReference>
<dbReference type="Proteomes" id="UP000694722">
    <property type="component" value="Unplaced"/>
</dbReference>
<dbReference type="Proteomes" id="UP000694723">
    <property type="component" value="Unplaced"/>
</dbReference>
<dbReference type="Proteomes" id="UP000694724">
    <property type="component" value="Unplaced"/>
</dbReference>
<dbReference type="Proteomes" id="UP000694725">
    <property type="component" value="Unplaced"/>
</dbReference>
<dbReference type="Proteomes" id="UP000694726">
    <property type="component" value="Unplaced"/>
</dbReference>
<dbReference type="Proteomes" id="UP000694727">
    <property type="component" value="Unplaced"/>
</dbReference>
<dbReference type="Proteomes" id="UP000694728">
    <property type="component" value="Unplaced"/>
</dbReference>
<dbReference type="GO" id="GO:0001669">
    <property type="term" value="C:acrosomal vesicle"/>
    <property type="evidence" value="ECO:0000250"/>
    <property type="project" value="UniProtKB"/>
</dbReference>
<dbReference type="GO" id="GO:0005930">
    <property type="term" value="C:axoneme"/>
    <property type="evidence" value="ECO:0000250"/>
    <property type="project" value="UniProtKB"/>
</dbReference>
<dbReference type="GO" id="GO:0005737">
    <property type="term" value="C:cytoplasm"/>
    <property type="evidence" value="ECO:0000250"/>
    <property type="project" value="UniProtKB"/>
</dbReference>
<dbReference type="GO" id="GO:0005868">
    <property type="term" value="C:cytoplasmic dynein complex"/>
    <property type="evidence" value="ECO:0000318"/>
    <property type="project" value="GO_Central"/>
</dbReference>
<dbReference type="GO" id="GO:0005815">
    <property type="term" value="C:microtubule organizing center"/>
    <property type="evidence" value="ECO:0000250"/>
    <property type="project" value="UniProtKB"/>
</dbReference>
<dbReference type="GO" id="GO:0031514">
    <property type="term" value="C:motile cilium"/>
    <property type="evidence" value="ECO:0007669"/>
    <property type="project" value="UniProtKB-SubCell"/>
</dbReference>
<dbReference type="GO" id="GO:0005634">
    <property type="term" value="C:nucleus"/>
    <property type="evidence" value="ECO:0000250"/>
    <property type="project" value="UniProtKB"/>
</dbReference>
<dbReference type="GO" id="GO:0045505">
    <property type="term" value="F:dynein intermediate chain binding"/>
    <property type="evidence" value="ECO:0000318"/>
    <property type="project" value="GO_Central"/>
</dbReference>
<dbReference type="GO" id="GO:0007018">
    <property type="term" value="P:microtubule-based movement"/>
    <property type="evidence" value="ECO:0000318"/>
    <property type="project" value="GO_Central"/>
</dbReference>
<dbReference type="CDD" id="cd21461">
    <property type="entry name" value="DLC-like_TCTEX1D4"/>
    <property type="match status" value="1"/>
</dbReference>
<dbReference type="Gene3D" id="3.30.1140.40">
    <property type="entry name" value="Tctex-1"/>
    <property type="match status" value="1"/>
</dbReference>
<dbReference type="InterPro" id="IPR005334">
    <property type="entry name" value="Tctex-1-like"/>
</dbReference>
<dbReference type="InterPro" id="IPR038586">
    <property type="entry name" value="Tctex-1-like_sf"/>
</dbReference>
<dbReference type="PANTHER" id="PTHR21255:SF55">
    <property type="entry name" value="DYNEIN LIGHT CHAIN TCTEX-TYPE 4"/>
    <property type="match status" value="1"/>
</dbReference>
<dbReference type="PANTHER" id="PTHR21255">
    <property type="entry name" value="T-COMPLEX-ASSOCIATED-TESTIS-EXPRESSED 1/ DYNEIN LIGHT CHAIN"/>
    <property type="match status" value="1"/>
</dbReference>
<dbReference type="Pfam" id="PF03645">
    <property type="entry name" value="Tctex-1"/>
    <property type="match status" value="1"/>
</dbReference>
<evidence type="ECO:0000250" key="1">
    <source>
        <dbReference type="UniProtKB" id="Q5JR98"/>
    </source>
</evidence>
<evidence type="ECO:0000250" key="2">
    <source>
        <dbReference type="UniProtKB" id="Q8CDY7"/>
    </source>
</evidence>
<evidence type="ECO:0000256" key="3">
    <source>
        <dbReference type="SAM" id="MobiDB-lite"/>
    </source>
</evidence>
<evidence type="ECO:0000305" key="4"/>
<feature type="chain" id="PRO_0000316873" description="Dynein light chain Tctex-type 4">
    <location>
        <begin position="1"/>
        <end position="219"/>
    </location>
</feature>
<feature type="region of interest" description="Disordered" evidence="3">
    <location>
        <begin position="1"/>
        <end position="84"/>
    </location>
</feature>
<feature type="compositionally biased region" description="Basic and acidic residues" evidence="3">
    <location>
        <begin position="10"/>
        <end position="20"/>
    </location>
</feature>
<feature type="modified residue" description="Phosphoserine" evidence="2">
    <location>
        <position position="64"/>
    </location>
</feature>
<comment type="subunit">
    <text evidence="1">Interacts with ENG/endoglin, TGFBR2 and TGFBR3. Interacts with PPP1CC.</text>
</comment>
<comment type="subcellular location">
    <subcellularLocation>
        <location evidence="1">Cell projection</location>
        <location evidence="1">Cilium</location>
        <location evidence="1">Flagellum</location>
    </subcellularLocation>
    <subcellularLocation>
        <location evidence="1">Cytoplasmic vesicle</location>
        <location evidence="1">Secretory vesicle</location>
        <location evidence="1">Acrosome</location>
    </subcellularLocation>
    <subcellularLocation>
        <location evidence="1">Cytoplasm</location>
        <location evidence="1">Cytoskeleton</location>
        <location evidence="1">Cilium axoneme</location>
    </subcellularLocation>
    <subcellularLocation>
        <location evidence="1">Cytoplasm</location>
    </subcellularLocation>
    <subcellularLocation>
        <location evidence="1">Nucleus</location>
    </subcellularLocation>
    <subcellularLocation>
        <location evidence="1">Cytoplasm</location>
        <location evidence="1">Cytoskeleton</location>
        <location evidence="1">Microtubule organizing center</location>
    </subcellularLocation>
    <text evidence="1">Present along the entire length of the flagellum, including principal and endpiece, and more predominantly in the midpiece region.</text>
</comment>
<comment type="similarity">
    <text evidence="4">Belongs to the dynein light chain Tctex-type family.</text>
</comment>
<sequence length="219" mass="22840">MAGRPVPAGRQEEELAKDPGQKLSLARPPGRLPSIDETRPAGPGPASRRGSVLGPASSFSRRNSLAGAGAGPGGRRPSLGPVPPLGWRVSFSGLPLGPARRPAPSYRTEPAPGERWEAARAQRALEAALAAGLRDARYVGAEAGRLARELCDLARVHLRELSPPRYKLVCSVVLGPRAGQGVHVPSRALWDTACDGLASATVTNASLFAVATVHGLYCE</sequence>
<accession>Q4VYA0</accession>
<gene>
    <name type="primary">DYNLT4</name>
    <name type="synonym">TCTEX1D4</name>
</gene>
<reference key="1">
    <citation type="journal article" date="2006" name="J. Biol. Chem.">
        <title>Identification of Tctex2beta, a novel dynein light chain family member that interacts with different transforming growth factor-beta receptors.</title>
        <authorList>
            <person name="Meng Q.-J."/>
            <person name="Lux A."/>
            <person name="Holloschi A."/>
            <person name="Li J."/>
            <person name="Hughes J.M.X."/>
            <person name="Foerg T."/>
            <person name="McCarthy J.E.G."/>
            <person name="Heagerty A.M."/>
            <person name="Kioschis P."/>
            <person name="Hafner M."/>
            <person name="Garland J.M."/>
        </authorList>
    </citation>
    <scope>NUCLEOTIDE SEQUENCE [MRNA]</scope>
    <source>
        <tissue>Lung</tissue>
        <tissue>Uterus</tissue>
    </source>
</reference>
<proteinExistence type="evidence at transcript level"/>
<protein>
    <recommendedName>
        <fullName>Dynein light chain Tctex-type 4</fullName>
    </recommendedName>
    <alternativeName>
        <fullName>Protein N22.1</fullName>
    </alternativeName>
    <alternativeName>
        <fullName>Tctex-2-beta</fullName>
    </alternativeName>
    <alternativeName>
        <fullName>Tctex1 domain-containing protein 4</fullName>
    </alternativeName>
</protein>